<proteinExistence type="inferred from homology"/>
<keyword id="KW-1185">Reference proteome</keyword>
<gene>
    <name type="ordered locus">Anae109_1947</name>
</gene>
<comment type="similarity">
    <text evidence="1">Belongs to the UPF0102 family.</text>
</comment>
<protein>
    <recommendedName>
        <fullName evidence="1">UPF0102 protein Anae109_1947</fullName>
    </recommendedName>
</protein>
<name>Y1947_ANADF</name>
<sequence>MTDGEGEAGDRRARGREAERIAEAFLSRAGFEILDRNHATRRGEVDLVCREGSVVCFVEVRSRTSTAQGGPEETVGRGKARRVVAAATDWALRNGGLEQEMRFDVVAVTFEEAGPRVALYRGAFDGEGKPGLW</sequence>
<reference key="1">
    <citation type="journal article" date="2015" name="Genome Announc.">
        <title>Complete genome sequence of Anaeromyxobacter sp. Fw109-5, an anaerobic, metal-reducing bacterium isolated from a contaminated subsurface environment.</title>
        <authorList>
            <person name="Hwang C."/>
            <person name="Copeland A."/>
            <person name="Lucas S."/>
            <person name="Lapidus A."/>
            <person name="Barry K."/>
            <person name="Glavina Del Rio T."/>
            <person name="Dalin E."/>
            <person name="Tice H."/>
            <person name="Pitluck S."/>
            <person name="Sims D."/>
            <person name="Brettin T."/>
            <person name="Bruce D.C."/>
            <person name="Detter J.C."/>
            <person name="Han C.S."/>
            <person name="Schmutz J."/>
            <person name="Larimer F.W."/>
            <person name="Land M.L."/>
            <person name="Hauser L.J."/>
            <person name="Kyrpides N."/>
            <person name="Lykidis A."/>
            <person name="Richardson P."/>
            <person name="Belieav A."/>
            <person name="Sanford R.A."/>
            <person name="Loeffler F.E."/>
            <person name="Fields M.W."/>
        </authorList>
    </citation>
    <scope>NUCLEOTIDE SEQUENCE [LARGE SCALE GENOMIC DNA]</scope>
    <source>
        <strain>Fw109-5</strain>
    </source>
</reference>
<accession>A7HBQ4</accession>
<feature type="chain" id="PRO_0000336121" description="UPF0102 protein Anae109_1947">
    <location>
        <begin position="1"/>
        <end position="133"/>
    </location>
</feature>
<organism>
    <name type="scientific">Anaeromyxobacter sp. (strain Fw109-5)</name>
    <dbReference type="NCBI Taxonomy" id="404589"/>
    <lineage>
        <taxon>Bacteria</taxon>
        <taxon>Pseudomonadati</taxon>
        <taxon>Myxococcota</taxon>
        <taxon>Myxococcia</taxon>
        <taxon>Myxococcales</taxon>
        <taxon>Cystobacterineae</taxon>
        <taxon>Anaeromyxobacteraceae</taxon>
        <taxon>Anaeromyxobacter</taxon>
    </lineage>
</organism>
<evidence type="ECO:0000255" key="1">
    <source>
        <dbReference type="HAMAP-Rule" id="MF_00048"/>
    </source>
</evidence>
<dbReference type="EMBL" id="CP000769">
    <property type="protein sequence ID" value="ABS26150.1"/>
    <property type="molecule type" value="Genomic_DNA"/>
</dbReference>
<dbReference type="RefSeq" id="WP_012096728.1">
    <property type="nucleotide sequence ID" value="NC_009675.1"/>
</dbReference>
<dbReference type="SMR" id="A7HBQ4"/>
<dbReference type="STRING" id="404589.Anae109_1947"/>
<dbReference type="KEGG" id="afw:Anae109_1947"/>
<dbReference type="eggNOG" id="COG0792">
    <property type="taxonomic scope" value="Bacteria"/>
</dbReference>
<dbReference type="HOGENOM" id="CLU_115353_1_0_7"/>
<dbReference type="OrthoDB" id="9794876at2"/>
<dbReference type="Proteomes" id="UP000006382">
    <property type="component" value="Chromosome"/>
</dbReference>
<dbReference type="GO" id="GO:0003676">
    <property type="term" value="F:nucleic acid binding"/>
    <property type="evidence" value="ECO:0007669"/>
    <property type="project" value="InterPro"/>
</dbReference>
<dbReference type="Gene3D" id="3.40.1350.10">
    <property type="match status" value="1"/>
</dbReference>
<dbReference type="HAMAP" id="MF_00048">
    <property type="entry name" value="UPF0102"/>
    <property type="match status" value="1"/>
</dbReference>
<dbReference type="InterPro" id="IPR011335">
    <property type="entry name" value="Restrct_endonuc-II-like"/>
</dbReference>
<dbReference type="InterPro" id="IPR011856">
    <property type="entry name" value="tRNA_endonuc-like_dom_sf"/>
</dbReference>
<dbReference type="InterPro" id="IPR003509">
    <property type="entry name" value="UPF0102_YraN-like"/>
</dbReference>
<dbReference type="NCBIfam" id="NF009150">
    <property type="entry name" value="PRK12497.1-3"/>
    <property type="match status" value="1"/>
</dbReference>
<dbReference type="NCBIfam" id="NF009154">
    <property type="entry name" value="PRK12497.3-3"/>
    <property type="match status" value="1"/>
</dbReference>
<dbReference type="PANTHER" id="PTHR34039">
    <property type="entry name" value="UPF0102 PROTEIN YRAN"/>
    <property type="match status" value="1"/>
</dbReference>
<dbReference type="PANTHER" id="PTHR34039:SF1">
    <property type="entry name" value="UPF0102 PROTEIN YRAN"/>
    <property type="match status" value="1"/>
</dbReference>
<dbReference type="Pfam" id="PF02021">
    <property type="entry name" value="UPF0102"/>
    <property type="match status" value="1"/>
</dbReference>
<dbReference type="SUPFAM" id="SSF52980">
    <property type="entry name" value="Restriction endonuclease-like"/>
    <property type="match status" value="1"/>
</dbReference>